<name>F216A_RAT</name>
<dbReference type="EMBL" id="BC086384">
    <property type="protein sequence ID" value="AAH86384.1"/>
    <property type="molecule type" value="mRNA"/>
</dbReference>
<dbReference type="RefSeq" id="NP_001008291.1">
    <property type="nucleotide sequence ID" value="NM_001008290.1"/>
</dbReference>
<dbReference type="FunCoup" id="Q5U1Y9">
    <property type="interactions" value="523"/>
</dbReference>
<dbReference type="STRING" id="10116.ENSRNOP00000046271"/>
<dbReference type="GlyGen" id="Q5U1Y9">
    <property type="glycosylation" value="1 site"/>
</dbReference>
<dbReference type="PhosphoSitePlus" id="Q5U1Y9"/>
<dbReference type="PaxDb" id="10116-ENSRNOP00000046271"/>
<dbReference type="Ensembl" id="ENSRNOT00000050398.3">
    <property type="protein sequence ID" value="ENSRNOP00000046271.2"/>
    <property type="gene ID" value="ENSRNOG00000031731.3"/>
</dbReference>
<dbReference type="GeneID" id="288667"/>
<dbReference type="KEGG" id="rno:288667"/>
<dbReference type="UCSC" id="RGD:1310861">
    <property type="organism name" value="rat"/>
</dbReference>
<dbReference type="AGR" id="RGD:1310861"/>
<dbReference type="CTD" id="29902"/>
<dbReference type="RGD" id="1310861">
    <property type="gene designation" value="Fam216a"/>
</dbReference>
<dbReference type="eggNOG" id="ENOG502SC0D">
    <property type="taxonomic scope" value="Eukaryota"/>
</dbReference>
<dbReference type="GeneTree" id="ENSGT00940000154512"/>
<dbReference type="HOGENOM" id="CLU_096833_0_0_1"/>
<dbReference type="InParanoid" id="Q5U1Y9"/>
<dbReference type="OMA" id="KPGRLFM"/>
<dbReference type="OrthoDB" id="5980156at2759"/>
<dbReference type="PhylomeDB" id="Q5U1Y9"/>
<dbReference type="TreeFam" id="TF337546"/>
<dbReference type="PRO" id="PR:Q5U1Y9"/>
<dbReference type="Proteomes" id="UP000002494">
    <property type="component" value="Chromosome 12"/>
</dbReference>
<dbReference type="Bgee" id="ENSRNOG00000031731">
    <property type="expression patterns" value="Expressed in testis and 20 other cell types or tissues"/>
</dbReference>
<dbReference type="InterPro" id="IPR029373">
    <property type="entry name" value="FAM216"/>
</dbReference>
<dbReference type="PANTHER" id="PTHR16476">
    <property type="entry name" value="FAMILY WITH SEQUENCE SIMILARITY 216 MEMBER A"/>
    <property type="match status" value="1"/>
</dbReference>
<dbReference type="PANTHER" id="PTHR16476:SF1">
    <property type="entry name" value="PROTEIN FAM216A"/>
    <property type="match status" value="1"/>
</dbReference>
<dbReference type="Pfam" id="PF15107">
    <property type="entry name" value="FAM216B"/>
    <property type="match status" value="1"/>
</dbReference>
<comment type="similarity">
    <text evidence="2">Belongs to the FAM216 family.</text>
</comment>
<reference key="1">
    <citation type="journal article" date="2004" name="Genome Res.">
        <title>The status, quality, and expansion of the NIH full-length cDNA project: the Mammalian Gene Collection (MGC).</title>
        <authorList>
            <consortium name="The MGC Project Team"/>
        </authorList>
    </citation>
    <scope>NUCLEOTIDE SEQUENCE [LARGE SCALE MRNA]</scope>
    <source>
        <tissue>Ovary</tissue>
    </source>
</reference>
<gene>
    <name type="primary">Fam216a</name>
</gene>
<proteinExistence type="evidence at transcript level"/>
<accession>Q5U1Y9</accession>
<organism>
    <name type="scientific">Rattus norvegicus</name>
    <name type="common">Rat</name>
    <dbReference type="NCBI Taxonomy" id="10116"/>
    <lineage>
        <taxon>Eukaryota</taxon>
        <taxon>Metazoa</taxon>
        <taxon>Chordata</taxon>
        <taxon>Craniata</taxon>
        <taxon>Vertebrata</taxon>
        <taxon>Euteleostomi</taxon>
        <taxon>Mammalia</taxon>
        <taxon>Eutheria</taxon>
        <taxon>Euarchontoglires</taxon>
        <taxon>Glires</taxon>
        <taxon>Rodentia</taxon>
        <taxon>Myomorpha</taxon>
        <taxon>Muroidea</taxon>
        <taxon>Muridae</taxon>
        <taxon>Murinae</taxon>
        <taxon>Rattus</taxon>
    </lineage>
</organism>
<protein>
    <recommendedName>
        <fullName>Protein FAM216A</fullName>
    </recommendedName>
</protein>
<evidence type="ECO:0000256" key="1">
    <source>
        <dbReference type="SAM" id="MobiDB-lite"/>
    </source>
</evidence>
<evidence type="ECO:0000305" key="2"/>
<sequence length="261" mass="29483">MPSRCPGVAGPPALARTEGSEGSAGQSYHQNSKGTGEQHKAERIKEGHRMSSHTAKLQELWRTTQIQTIHIPKSMTDASFLKHPELTSGQKRYLCSIAKICNSSYLRTLMKRQYMHLFHHGLQKPGVLTHHRSHISSRYSQKQHSPCTTWRHHLEREDSLGIAAEAPEMIIHALWRPLRHKEGLKIGYASKTRCKSLKIFRRPGRLFLLPVSSKDYQPCMNDETKEEDLLNECMQSMSIQEQGSSHASLTVSCPTPSSAIP</sequence>
<keyword id="KW-1185">Reference proteome</keyword>
<feature type="chain" id="PRO_0000288863" description="Protein FAM216A">
    <location>
        <begin position="1"/>
        <end position="261"/>
    </location>
</feature>
<feature type="region of interest" description="Disordered" evidence="1">
    <location>
        <begin position="1"/>
        <end position="52"/>
    </location>
</feature>
<feature type="compositionally biased region" description="Polar residues" evidence="1">
    <location>
        <begin position="23"/>
        <end position="35"/>
    </location>
</feature>
<feature type="compositionally biased region" description="Basic and acidic residues" evidence="1">
    <location>
        <begin position="36"/>
        <end position="49"/>
    </location>
</feature>